<reference key="1">
    <citation type="journal article" date="2007" name="Nat. Biotechnol.">
        <title>Complete genome sequence of the myxobacterium Sorangium cellulosum.</title>
        <authorList>
            <person name="Schneiker S."/>
            <person name="Perlova O."/>
            <person name="Kaiser O."/>
            <person name="Gerth K."/>
            <person name="Alici A."/>
            <person name="Altmeyer M.O."/>
            <person name="Bartels D."/>
            <person name="Bekel T."/>
            <person name="Beyer S."/>
            <person name="Bode E."/>
            <person name="Bode H.B."/>
            <person name="Bolten C.J."/>
            <person name="Choudhuri J.V."/>
            <person name="Doss S."/>
            <person name="Elnakady Y.A."/>
            <person name="Frank B."/>
            <person name="Gaigalat L."/>
            <person name="Goesmann A."/>
            <person name="Groeger C."/>
            <person name="Gross F."/>
            <person name="Jelsbak L."/>
            <person name="Jelsbak L."/>
            <person name="Kalinowski J."/>
            <person name="Kegler C."/>
            <person name="Knauber T."/>
            <person name="Konietzny S."/>
            <person name="Kopp M."/>
            <person name="Krause L."/>
            <person name="Krug D."/>
            <person name="Linke B."/>
            <person name="Mahmud T."/>
            <person name="Martinez-Arias R."/>
            <person name="McHardy A.C."/>
            <person name="Merai M."/>
            <person name="Meyer F."/>
            <person name="Mormann S."/>
            <person name="Munoz-Dorado J."/>
            <person name="Perez J."/>
            <person name="Pradella S."/>
            <person name="Rachid S."/>
            <person name="Raddatz G."/>
            <person name="Rosenau F."/>
            <person name="Rueckert C."/>
            <person name="Sasse F."/>
            <person name="Scharfe M."/>
            <person name="Schuster S.C."/>
            <person name="Suen G."/>
            <person name="Treuner-Lange A."/>
            <person name="Velicer G.J."/>
            <person name="Vorholter F.-J."/>
            <person name="Weissman K.J."/>
            <person name="Welch R.D."/>
            <person name="Wenzel S.C."/>
            <person name="Whitworth D.E."/>
            <person name="Wilhelm S."/>
            <person name="Wittmann C."/>
            <person name="Bloecker H."/>
            <person name="Puehler A."/>
            <person name="Mueller R."/>
        </authorList>
    </citation>
    <scope>NUCLEOTIDE SEQUENCE [LARGE SCALE GENOMIC DNA]</scope>
    <source>
        <strain>So ce56</strain>
    </source>
</reference>
<gene>
    <name evidence="1" type="primary">floA</name>
    <name type="ordered locus">sce5333</name>
</gene>
<comment type="function">
    <text evidence="1">Found in functional membrane microdomains (FMM) that may be equivalent to eukaryotic membrane rafts. FMMs are highly dynamic and increase in number as cells age. Flotillins are thought to be important factors in membrane fluidity.</text>
</comment>
<comment type="subunit">
    <text evidence="1">Homooligomerizes.</text>
</comment>
<comment type="subcellular location">
    <subcellularLocation>
        <location evidence="1">Cell membrane</location>
        <topology evidence="1">Multi-pass membrane protein</topology>
    </subcellularLocation>
    <subcellularLocation>
        <location evidence="1">Membrane raft</location>
        <topology evidence="1">Multi-pass membrane protein</topology>
    </subcellularLocation>
</comment>
<comment type="similarity">
    <text evidence="1">Belongs to the flotillin-like FloA family.</text>
</comment>
<dbReference type="EMBL" id="AM746676">
    <property type="protein sequence ID" value="CAN95496.1"/>
    <property type="molecule type" value="Genomic_DNA"/>
</dbReference>
<dbReference type="RefSeq" id="WP_012237964.1">
    <property type="nucleotide sequence ID" value="NC_010162.1"/>
</dbReference>
<dbReference type="SMR" id="A9FXA7"/>
<dbReference type="STRING" id="448385.sce5333"/>
<dbReference type="KEGG" id="scl:sce5333"/>
<dbReference type="eggNOG" id="COG4864">
    <property type="taxonomic scope" value="Bacteria"/>
</dbReference>
<dbReference type="HOGENOM" id="CLU_836378_0_0_7"/>
<dbReference type="OrthoDB" id="9808365at2"/>
<dbReference type="BioCyc" id="SCEL448385:SCE_RS27370-MONOMER"/>
<dbReference type="Proteomes" id="UP000002139">
    <property type="component" value="Chromosome"/>
</dbReference>
<dbReference type="GO" id="GO:0045121">
    <property type="term" value="C:membrane raft"/>
    <property type="evidence" value="ECO:0007669"/>
    <property type="project" value="UniProtKB-SubCell"/>
</dbReference>
<dbReference type="GO" id="GO:0005886">
    <property type="term" value="C:plasma membrane"/>
    <property type="evidence" value="ECO:0007669"/>
    <property type="project" value="UniProtKB-SubCell"/>
</dbReference>
<dbReference type="GO" id="GO:0000166">
    <property type="term" value="F:nucleotide binding"/>
    <property type="evidence" value="ECO:0007669"/>
    <property type="project" value="InterPro"/>
</dbReference>
<dbReference type="Gene3D" id="1.10.287.40">
    <property type="entry name" value="Serine-tRNA synthetase, tRNA binding domain"/>
    <property type="match status" value="1"/>
</dbReference>
<dbReference type="HAMAP" id="MF_01562">
    <property type="entry name" value="FloA"/>
    <property type="match status" value="1"/>
</dbReference>
<dbReference type="InterPro" id="IPR022853">
    <property type="entry name" value="FloA"/>
</dbReference>
<dbReference type="InterPro" id="IPR042103">
    <property type="entry name" value="SerRS_1_N_sf"/>
</dbReference>
<dbReference type="InterPro" id="IPR010978">
    <property type="entry name" value="tRNA-bd_arm"/>
</dbReference>
<dbReference type="NCBIfam" id="NF010186">
    <property type="entry name" value="PRK13665.1"/>
    <property type="match status" value="1"/>
</dbReference>
<dbReference type="Pfam" id="PF12127">
    <property type="entry name" value="FloA"/>
    <property type="match status" value="1"/>
</dbReference>
<dbReference type="SUPFAM" id="SSF46589">
    <property type="entry name" value="tRNA-binding arm"/>
    <property type="match status" value="1"/>
</dbReference>
<accession>A9FXA7</accession>
<evidence type="ECO:0000255" key="1">
    <source>
        <dbReference type="HAMAP-Rule" id="MF_01562"/>
    </source>
</evidence>
<proteinExistence type="inferred from homology"/>
<keyword id="KW-1003">Cell membrane</keyword>
<keyword id="KW-0472">Membrane</keyword>
<keyword id="KW-1185">Reference proteome</keyword>
<keyword id="KW-0812">Transmembrane</keyword>
<keyword id="KW-1133">Transmembrane helix</keyword>
<organism>
    <name type="scientific">Sorangium cellulosum (strain So ce56)</name>
    <name type="common">Polyangium cellulosum (strain So ce56)</name>
    <dbReference type="NCBI Taxonomy" id="448385"/>
    <lineage>
        <taxon>Bacteria</taxon>
        <taxon>Pseudomonadati</taxon>
        <taxon>Myxococcota</taxon>
        <taxon>Polyangia</taxon>
        <taxon>Polyangiales</taxon>
        <taxon>Polyangiaceae</taxon>
        <taxon>Sorangium</taxon>
    </lineage>
</organism>
<protein>
    <recommendedName>
        <fullName evidence="1">Flotillin-like protein FloA</fullName>
    </recommendedName>
</protein>
<sequence>MEIISVIVIGGLVLVAIVATLYMVPLRLWIAAQASGAGVSMLTLIAMRLRRVPPDQIVNARISAVKAGLEEVSVDMLEAHYLARGRVEAVVNALISAGKAGMELDFSRAAAIDLAGRNVLEAVAMSVNPRVIETPKVSAVAKDGIQLLAIARVTVRANIDRLVGGAGEQTVLARVGEGVVSTIGSADDYKHVLENPDTISKNVLKKGLDAGTAFEILSIDIADVDVGSNIGAKLQTEQAEADKQVAQAKAESRRALAVAQEQEMKAKTQEMRAKLVEAESTIPLAVAEALRTGKLGVMDYYNMRNVIADTEMRQGIAGTTGGKPDPAGES</sequence>
<name>FLOA_SORC5</name>
<feature type="chain" id="PRO_1000185441" description="Flotillin-like protein FloA">
    <location>
        <begin position="1"/>
        <end position="330"/>
    </location>
</feature>
<feature type="transmembrane region" description="Helical" evidence="1">
    <location>
        <begin position="3"/>
        <end position="23"/>
    </location>
</feature>
<feature type="transmembrane region" description="Helical" evidence="1">
    <location>
        <begin position="26"/>
        <end position="46"/>
    </location>
</feature>